<comment type="function">
    <text>Putative transcription factor.</text>
</comment>
<comment type="subunit">
    <text evidence="1 4 5">Homo- and heterodimer with other ZFHD proteins (By similarity). Interacts with MIF1, MIF2 and MIF3; these interactions prevent nuclear localization and DNA-binding to inhibit transcription regulation activity. Binds to ZHD11.</text>
</comment>
<comment type="interaction">
    <interactant intactId="EBI-1806559">
        <id>Q9FMY7</id>
    </interactant>
    <interactant intactId="EBI-1806298">
        <id>Q9FIW9</id>
        <label>ZHD10</label>
    </interactant>
    <organismsDiffer>false</organismsDiffer>
    <experiments>4</experiments>
</comment>
<comment type="subcellular location">
    <subcellularLocation>
        <location evidence="1">Nucleus</location>
    </subcellularLocation>
    <text evidence="1">Interactions with MIF proteins prevent nuclear subcellular location and leads to a scattered repartition throughout the cytoplasm.</text>
</comment>
<comment type="tissue specificity">
    <text evidence="4">Mostly expressed in flowers.</text>
</comment>
<comment type="domain">
    <text>The homeodomain differs form the typical one by having namely 4 instead of 3 extra amino acids inserted in the loop between helix 1 and helix 2.</text>
</comment>
<keyword id="KW-0238">DNA-binding</keyword>
<keyword id="KW-0371">Homeobox</keyword>
<keyword id="KW-0479">Metal-binding</keyword>
<keyword id="KW-0539">Nucleus</keyword>
<keyword id="KW-1185">Reference proteome</keyword>
<keyword id="KW-0804">Transcription</keyword>
<keyword id="KW-0805">Transcription regulation</keyword>
<keyword id="KW-0862">Zinc</keyword>
<keyword id="KW-0863">Zinc-finger</keyword>
<organism>
    <name type="scientific">Arabidopsis thaliana</name>
    <name type="common">Mouse-ear cress</name>
    <dbReference type="NCBI Taxonomy" id="3702"/>
    <lineage>
        <taxon>Eukaryota</taxon>
        <taxon>Viridiplantae</taxon>
        <taxon>Streptophyta</taxon>
        <taxon>Embryophyta</taxon>
        <taxon>Tracheophyta</taxon>
        <taxon>Spermatophyta</taxon>
        <taxon>Magnoliopsida</taxon>
        <taxon>eudicotyledons</taxon>
        <taxon>Gunneridae</taxon>
        <taxon>Pentapetalae</taxon>
        <taxon>rosids</taxon>
        <taxon>malvids</taxon>
        <taxon>Brassicales</taxon>
        <taxon>Brassicaceae</taxon>
        <taxon>Camelineae</taxon>
        <taxon>Arabidopsis</taxon>
    </lineage>
</organism>
<feature type="chain" id="PRO_0000426026" description="Zinc-finger homeodomain protein 13">
    <location>
        <begin position="1"/>
        <end position="242"/>
    </location>
</feature>
<feature type="zinc finger region" description="ZF-HD dimerization-type; degenerate" evidence="2">
    <location>
        <begin position="64"/>
        <end position="111"/>
    </location>
</feature>
<feature type="DNA-binding region" description="Homeobox">
    <location>
        <begin position="179"/>
        <end position="238"/>
    </location>
</feature>
<feature type="region of interest" description="Disordered" evidence="3">
    <location>
        <begin position="144"/>
        <end position="166"/>
    </location>
</feature>
<feature type="compositionally biased region" description="Basic and acidic residues" evidence="3">
    <location>
        <begin position="155"/>
        <end position="166"/>
    </location>
</feature>
<feature type="site" description="Required for DNA-binding" evidence="1">
    <location>
        <position position="231"/>
    </location>
</feature>
<feature type="sequence conflict" description="In Ref. 4; AAM60948." evidence="6" ref="4">
    <original>V</original>
    <variation>I</variation>
    <location>
        <position position="123"/>
    </location>
</feature>
<proteinExistence type="evidence at protein level"/>
<dbReference type="EMBL" id="AB007647">
    <property type="protein sequence ID" value="BAB10634.1"/>
    <property type="molecule type" value="Genomic_DNA"/>
</dbReference>
<dbReference type="EMBL" id="CP002688">
    <property type="protein sequence ID" value="AED94862.1"/>
    <property type="molecule type" value="Genomic_DNA"/>
</dbReference>
<dbReference type="EMBL" id="BT002832">
    <property type="protein sequence ID" value="AAO22651.1"/>
    <property type="molecule type" value="mRNA"/>
</dbReference>
<dbReference type="EMBL" id="BT004379">
    <property type="protein sequence ID" value="AAO42373.1"/>
    <property type="molecule type" value="mRNA"/>
</dbReference>
<dbReference type="EMBL" id="AY084367">
    <property type="protein sequence ID" value="AAM60948.1"/>
    <property type="molecule type" value="mRNA"/>
</dbReference>
<dbReference type="RefSeq" id="NP_199092.1">
    <property type="nucleotide sequence ID" value="NM_123643.3"/>
</dbReference>
<dbReference type="SMR" id="Q9FMY7"/>
<dbReference type="BioGRID" id="19538">
    <property type="interactions" value="14"/>
</dbReference>
<dbReference type="FunCoup" id="Q9FMY7">
    <property type="interactions" value="6"/>
</dbReference>
<dbReference type="IntAct" id="Q9FMY7">
    <property type="interactions" value="16"/>
</dbReference>
<dbReference type="STRING" id="3702.Q9FMY7"/>
<dbReference type="PaxDb" id="3702-AT5G42780.1"/>
<dbReference type="ProteomicsDB" id="242348"/>
<dbReference type="EnsemblPlants" id="AT5G42780.1">
    <property type="protein sequence ID" value="AT5G42780.1"/>
    <property type="gene ID" value="AT5G42780"/>
</dbReference>
<dbReference type="GeneID" id="834288"/>
<dbReference type="Gramene" id="AT5G42780.1">
    <property type="protein sequence ID" value="AT5G42780.1"/>
    <property type="gene ID" value="AT5G42780"/>
</dbReference>
<dbReference type="KEGG" id="ath:AT5G42780"/>
<dbReference type="Araport" id="AT5G42780"/>
<dbReference type="TAIR" id="AT5G42780">
    <property type="gene designation" value="HB27"/>
</dbReference>
<dbReference type="eggNOG" id="ENOG502QZSB">
    <property type="taxonomic scope" value="Eukaryota"/>
</dbReference>
<dbReference type="HOGENOM" id="CLU_039237_2_2_1"/>
<dbReference type="InParanoid" id="Q9FMY7"/>
<dbReference type="OMA" id="TTAYDGC"/>
<dbReference type="PRO" id="PR:Q9FMY7"/>
<dbReference type="Proteomes" id="UP000006548">
    <property type="component" value="Chromosome 5"/>
</dbReference>
<dbReference type="ExpressionAtlas" id="Q9FMY7">
    <property type="expression patterns" value="baseline and differential"/>
</dbReference>
<dbReference type="GO" id="GO:0005634">
    <property type="term" value="C:nucleus"/>
    <property type="evidence" value="ECO:0000250"/>
    <property type="project" value="UniProtKB"/>
</dbReference>
<dbReference type="GO" id="GO:0003677">
    <property type="term" value="F:DNA binding"/>
    <property type="evidence" value="ECO:0000250"/>
    <property type="project" value="TAIR"/>
</dbReference>
<dbReference type="GO" id="GO:0042803">
    <property type="term" value="F:protein homodimerization activity"/>
    <property type="evidence" value="ECO:0000250"/>
    <property type="project" value="UniProtKB"/>
</dbReference>
<dbReference type="GO" id="GO:0008270">
    <property type="term" value="F:zinc ion binding"/>
    <property type="evidence" value="ECO:0007669"/>
    <property type="project" value="UniProtKB-KW"/>
</dbReference>
<dbReference type="Gene3D" id="1.10.10.60">
    <property type="entry name" value="Homeodomain-like"/>
    <property type="match status" value="1"/>
</dbReference>
<dbReference type="InterPro" id="IPR009057">
    <property type="entry name" value="Homeodomain-like_sf"/>
</dbReference>
<dbReference type="InterPro" id="IPR006455">
    <property type="entry name" value="Homeodomain_ZF_HD"/>
</dbReference>
<dbReference type="InterPro" id="IPR006456">
    <property type="entry name" value="ZF_HD_homeobox_Cys/His_dimer"/>
</dbReference>
<dbReference type="NCBIfam" id="TIGR01565">
    <property type="entry name" value="homeo_ZF_HD"/>
    <property type="match status" value="1"/>
</dbReference>
<dbReference type="NCBIfam" id="TIGR01566">
    <property type="entry name" value="ZF_HD_prot_N"/>
    <property type="match status" value="1"/>
</dbReference>
<dbReference type="PANTHER" id="PTHR31948:SF154">
    <property type="entry name" value="ZINC-FINGER HOMEODOMAIN PROTEIN 13"/>
    <property type="match status" value="1"/>
</dbReference>
<dbReference type="PANTHER" id="PTHR31948">
    <property type="entry name" value="ZINC-FINGER HOMEODOMAIN PROTEIN 2"/>
    <property type="match status" value="1"/>
</dbReference>
<dbReference type="Pfam" id="PF04770">
    <property type="entry name" value="ZF-HD_dimer"/>
    <property type="match status" value="1"/>
</dbReference>
<dbReference type="SUPFAM" id="SSF46689">
    <property type="entry name" value="Homeodomain-like"/>
    <property type="match status" value="1"/>
</dbReference>
<dbReference type="PROSITE" id="PS51523">
    <property type="entry name" value="ZF_HD_DIMER"/>
    <property type="match status" value="1"/>
</dbReference>
<protein>
    <recommendedName>
        <fullName>Zinc-finger homeodomain protein 13</fullName>
        <shortName>AtZHD13</shortName>
    </recommendedName>
    <alternativeName>
        <fullName>Homeobox protein 27</fullName>
        <shortName>AtHB-27</shortName>
    </alternativeName>
</protein>
<name>ZHD13_ARATH</name>
<accession>Q9FMY7</accession>
<accession>Q8LGB1</accession>
<evidence type="ECO:0000250" key="1"/>
<evidence type="ECO:0000255" key="2">
    <source>
        <dbReference type="PROSITE-ProRule" id="PRU00856"/>
    </source>
</evidence>
<evidence type="ECO:0000256" key="3">
    <source>
        <dbReference type="SAM" id="MobiDB-lite"/>
    </source>
</evidence>
<evidence type="ECO:0000269" key="4">
    <source>
    </source>
</evidence>
<evidence type="ECO:0000269" key="5">
    <source>
    </source>
</evidence>
<evidence type="ECO:0000305" key="6"/>
<sequence>MDEIKPKKEENSKRRRNVKPICRETGDHVHYLPTCKTKPKPTRTHHAPPPILDSIFKVTHKPHYYECRKNHAADIGTTAYDGCGEFVSSTGEEDSLNCAACGCHRNFHREELIPENGGVTETVLEVLKISSCQFRRIFCSPYGGGKSEGKKKKKEKESYGGDPIIKDRFGGAEEEEGIVKRLKTKFTAEQTEKMRDYAEKLRWKVRPERQEEVEEFCVEIGVNRKNFRIWMNNHKDKIIIDE</sequence>
<reference key="1">
    <citation type="journal article" date="1997" name="DNA Res.">
        <title>Structural analysis of Arabidopsis thaliana chromosome 5. III. Sequence features of the regions of 1,191,918 bp covered by seventeen physically assigned P1 clones.</title>
        <authorList>
            <person name="Nakamura Y."/>
            <person name="Sato S."/>
            <person name="Kaneko T."/>
            <person name="Kotani H."/>
            <person name="Asamizu E."/>
            <person name="Miyajima N."/>
            <person name="Tabata S."/>
        </authorList>
    </citation>
    <scope>NUCLEOTIDE SEQUENCE [LARGE SCALE GENOMIC DNA]</scope>
    <source>
        <strain>cv. Columbia</strain>
    </source>
</reference>
<reference key="2">
    <citation type="journal article" date="2017" name="Plant J.">
        <title>Araport11: a complete reannotation of the Arabidopsis thaliana reference genome.</title>
        <authorList>
            <person name="Cheng C.Y."/>
            <person name="Krishnakumar V."/>
            <person name="Chan A.P."/>
            <person name="Thibaud-Nissen F."/>
            <person name="Schobel S."/>
            <person name="Town C.D."/>
        </authorList>
    </citation>
    <scope>GENOME REANNOTATION</scope>
    <source>
        <strain>cv. Columbia</strain>
    </source>
</reference>
<reference key="3">
    <citation type="journal article" date="2003" name="Science">
        <title>Empirical analysis of transcriptional activity in the Arabidopsis genome.</title>
        <authorList>
            <person name="Yamada K."/>
            <person name="Lim J."/>
            <person name="Dale J.M."/>
            <person name="Chen H."/>
            <person name="Shinn P."/>
            <person name="Palm C.J."/>
            <person name="Southwick A.M."/>
            <person name="Wu H.C."/>
            <person name="Kim C.J."/>
            <person name="Nguyen M."/>
            <person name="Pham P.K."/>
            <person name="Cheuk R.F."/>
            <person name="Karlin-Newmann G."/>
            <person name="Liu S.X."/>
            <person name="Lam B."/>
            <person name="Sakano H."/>
            <person name="Wu T."/>
            <person name="Yu G."/>
            <person name="Miranda M."/>
            <person name="Quach H.L."/>
            <person name="Tripp M."/>
            <person name="Chang C.H."/>
            <person name="Lee J.M."/>
            <person name="Toriumi M.J."/>
            <person name="Chan M.M."/>
            <person name="Tang C.C."/>
            <person name="Onodera C.S."/>
            <person name="Deng J.M."/>
            <person name="Akiyama K."/>
            <person name="Ansari Y."/>
            <person name="Arakawa T."/>
            <person name="Banh J."/>
            <person name="Banno F."/>
            <person name="Bowser L."/>
            <person name="Brooks S.Y."/>
            <person name="Carninci P."/>
            <person name="Chao Q."/>
            <person name="Choy N."/>
            <person name="Enju A."/>
            <person name="Goldsmith A.D."/>
            <person name="Gurjal M."/>
            <person name="Hansen N.F."/>
            <person name="Hayashizaki Y."/>
            <person name="Johnson-Hopson C."/>
            <person name="Hsuan V.W."/>
            <person name="Iida K."/>
            <person name="Karnes M."/>
            <person name="Khan S."/>
            <person name="Koesema E."/>
            <person name="Ishida J."/>
            <person name="Jiang P.X."/>
            <person name="Jones T."/>
            <person name="Kawai J."/>
            <person name="Kamiya A."/>
            <person name="Meyers C."/>
            <person name="Nakajima M."/>
            <person name="Narusaka M."/>
            <person name="Seki M."/>
            <person name="Sakurai T."/>
            <person name="Satou M."/>
            <person name="Tamse R."/>
            <person name="Vaysberg M."/>
            <person name="Wallender E.K."/>
            <person name="Wong C."/>
            <person name="Yamamura Y."/>
            <person name="Yuan S."/>
            <person name="Shinozaki K."/>
            <person name="Davis R.W."/>
            <person name="Theologis A."/>
            <person name="Ecker J.R."/>
        </authorList>
    </citation>
    <scope>NUCLEOTIDE SEQUENCE [LARGE SCALE MRNA]</scope>
    <source>
        <strain>cv. Columbia</strain>
    </source>
</reference>
<reference key="4">
    <citation type="submission" date="2002-03" db="EMBL/GenBank/DDBJ databases">
        <title>Full-length cDNA from Arabidopsis thaliana.</title>
        <authorList>
            <person name="Brover V.V."/>
            <person name="Troukhan M.E."/>
            <person name="Alexandrov N.A."/>
            <person name="Lu Y.-P."/>
            <person name="Flavell R.B."/>
            <person name="Feldmann K.A."/>
        </authorList>
    </citation>
    <scope>NUCLEOTIDE SEQUENCE [LARGE SCALE MRNA]</scope>
</reference>
<reference key="5">
    <citation type="journal article" date="2006" name="Plant Physiol.">
        <title>The Arabidopsis zinc finger-homeodomain genes encode proteins with unique biochemical properties that are coordinately expressed during floral development.</title>
        <authorList>
            <person name="Tan Q.K."/>
            <person name="Irish V.F."/>
        </authorList>
    </citation>
    <scope>INTERACTION WITH ZHD11</scope>
    <scope>TISSUE SPECIFICITY</scope>
    <scope>GENE FAMILY</scope>
</reference>
<reference key="6">
    <citation type="journal article" date="2008" name="J. Integr. Plant Biol.">
        <title>Phylogenetic analysis of the plant-specific zinc finger-homeobox and mini zinc finger gene families.</title>
        <authorList>
            <person name="Hu W."/>
            <person name="dePamphilis C.W."/>
            <person name="Ma H."/>
        </authorList>
    </citation>
    <scope>GENE FAMILY</scope>
    <scope>NOMENCLATURE</scope>
</reference>
<reference key="7">
    <citation type="journal article" date="2011" name="J. Biol. Chem.">
        <title>Nuclear import and DNA binding of the ZHD5 transcription factor is modulated by a competitive peptide inhibitor in Arabidopsis.</title>
        <authorList>
            <person name="Hong S.-Y."/>
            <person name="Kim O.-K."/>
            <person name="Kim S.-G."/>
            <person name="Yang M.-S."/>
            <person name="Park C.-M."/>
        </authorList>
    </citation>
    <scope>INTERACTION WITH MIF1; MIF2 AND MIF3</scope>
    <scope>GENE FAMILY</scope>
    <scope>NOMENCLATURE</scope>
    <source>
        <strain>cv. Columbia</strain>
    </source>
</reference>
<gene>
    <name type="primary">ZHD13</name>
    <name type="synonym">HB27</name>
    <name type="ordered locus">At5g42780</name>
    <name type="ORF">MJB21.16</name>
</gene>